<name>CYB_HYLNI</name>
<geneLocation type="mitochondrion"/>
<comment type="function">
    <text evidence="2">Component of the ubiquinol-cytochrome c reductase complex (complex III or cytochrome b-c1 complex) that is part of the mitochondrial respiratory chain. The b-c1 complex mediates electron transfer from ubiquinol to cytochrome c. Contributes to the generation of a proton gradient across the mitochondrial membrane that is then used for ATP synthesis.</text>
</comment>
<comment type="cofactor">
    <cofactor evidence="2">
        <name>heme b</name>
        <dbReference type="ChEBI" id="CHEBI:60344"/>
    </cofactor>
    <text evidence="2">Binds 2 heme b groups non-covalently.</text>
</comment>
<comment type="subunit">
    <text evidence="2">The cytochrome bc1 complex contains 11 subunits: 3 respiratory subunits (MT-CYB, CYC1 and UQCRFS1), 2 core proteins (UQCRC1 and UQCRC2) and 6 low-molecular weight proteins (UQCRH/QCR6, UQCRB/QCR7, UQCRQ/QCR8, UQCR10/QCR9, UQCR11/QCR10 and a cleavage product of UQCRFS1). This cytochrome bc1 complex then forms a dimer.</text>
</comment>
<comment type="subcellular location">
    <subcellularLocation>
        <location evidence="2">Mitochondrion inner membrane</location>
        <topology evidence="2">Multi-pass membrane protein</topology>
    </subcellularLocation>
</comment>
<comment type="miscellaneous">
    <text evidence="1">Heme 1 (or BL or b562) is low-potential and absorbs at about 562 nm, and heme 2 (or BH or b566) is high-potential and absorbs at about 566 nm.</text>
</comment>
<comment type="similarity">
    <text evidence="3 4">Belongs to the cytochrome b family.</text>
</comment>
<comment type="caution">
    <text evidence="2">The full-length protein contains only eight transmembrane helices, not nine as predicted by bioinformatics tools.</text>
</comment>
<evidence type="ECO:0000250" key="1"/>
<evidence type="ECO:0000250" key="2">
    <source>
        <dbReference type="UniProtKB" id="P00157"/>
    </source>
</evidence>
<evidence type="ECO:0000255" key="3">
    <source>
        <dbReference type="PROSITE-ProRule" id="PRU00967"/>
    </source>
</evidence>
<evidence type="ECO:0000255" key="4">
    <source>
        <dbReference type="PROSITE-ProRule" id="PRU00968"/>
    </source>
</evidence>
<protein>
    <recommendedName>
        <fullName>Cytochrome b</fullName>
    </recommendedName>
    <alternativeName>
        <fullName>Complex III subunit 3</fullName>
    </alternativeName>
    <alternativeName>
        <fullName>Complex III subunit III</fullName>
    </alternativeName>
    <alternativeName>
        <fullName>Cytochrome b-c1 complex subunit 3</fullName>
    </alternativeName>
    <alternativeName>
        <fullName>Ubiquinol-cytochrome-c reductase complex cytochrome b subunit</fullName>
    </alternativeName>
</protein>
<feature type="chain" id="PRO_0000257904" description="Cytochrome b">
    <location>
        <begin position="1"/>
        <end position="379"/>
    </location>
</feature>
<feature type="transmembrane region" description="Helical" evidence="2">
    <location>
        <begin position="33"/>
        <end position="53"/>
    </location>
</feature>
<feature type="transmembrane region" description="Helical" evidence="2">
    <location>
        <begin position="77"/>
        <end position="98"/>
    </location>
</feature>
<feature type="transmembrane region" description="Helical" evidence="2">
    <location>
        <begin position="113"/>
        <end position="133"/>
    </location>
</feature>
<feature type="transmembrane region" description="Helical" evidence="2">
    <location>
        <begin position="178"/>
        <end position="198"/>
    </location>
</feature>
<feature type="transmembrane region" description="Helical" evidence="2">
    <location>
        <begin position="226"/>
        <end position="246"/>
    </location>
</feature>
<feature type="transmembrane region" description="Helical" evidence="2">
    <location>
        <begin position="288"/>
        <end position="308"/>
    </location>
</feature>
<feature type="transmembrane region" description="Helical" evidence="2">
    <location>
        <begin position="320"/>
        <end position="340"/>
    </location>
</feature>
<feature type="transmembrane region" description="Helical" evidence="2">
    <location>
        <begin position="347"/>
        <end position="367"/>
    </location>
</feature>
<feature type="binding site" description="axial binding residue" evidence="2">
    <location>
        <position position="83"/>
    </location>
    <ligand>
        <name>heme b</name>
        <dbReference type="ChEBI" id="CHEBI:60344"/>
        <label>b562</label>
    </ligand>
    <ligandPart>
        <name>Fe</name>
        <dbReference type="ChEBI" id="CHEBI:18248"/>
    </ligandPart>
</feature>
<feature type="binding site" description="axial binding residue" evidence="2">
    <location>
        <position position="97"/>
    </location>
    <ligand>
        <name>heme b</name>
        <dbReference type="ChEBI" id="CHEBI:60344"/>
        <label>b566</label>
    </ligand>
    <ligandPart>
        <name>Fe</name>
        <dbReference type="ChEBI" id="CHEBI:18248"/>
    </ligandPart>
</feature>
<feature type="binding site" description="axial binding residue" evidence="2">
    <location>
        <position position="182"/>
    </location>
    <ligand>
        <name>heme b</name>
        <dbReference type="ChEBI" id="CHEBI:60344"/>
        <label>b562</label>
    </ligand>
    <ligandPart>
        <name>Fe</name>
        <dbReference type="ChEBI" id="CHEBI:18248"/>
    </ligandPart>
</feature>
<feature type="binding site" description="axial binding residue" evidence="2">
    <location>
        <position position="196"/>
    </location>
    <ligand>
        <name>heme b</name>
        <dbReference type="ChEBI" id="CHEBI:60344"/>
        <label>b566</label>
    </ligand>
    <ligandPart>
        <name>Fe</name>
        <dbReference type="ChEBI" id="CHEBI:18248"/>
    </ligandPart>
</feature>
<feature type="binding site" evidence="2">
    <location>
        <position position="201"/>
    </location>
    <ligand>
        <name>a ubiquinone</name>
        <dbReference type="ChEBI" id="CHEBI:16389"/>
    </ligand>
</feature>
<organism>
    <name type="scientific">Hylopetes nigripes</name>
    <name type="common">Palawan flying squirrel</name>
    <dbReference type="NCBI Taxonomy" id="254707"/>
    <lineage>
        <taxon>Eukaryota</taxon>
        <taxon>Metazoa</taxon>
        <taxon>Chordata</taxon>
        <taxon>Craniata</taxon>
        <taxon>Vertebrata</taxon>
        <taxon>Euteleostomi</taxon>
        <taxon>Mammalia</taxon>
        <taxon>Eutheria</taxon>
        <taxon>Euarchontoglires</taxon>
        <taxon>Glires</taxon>
        <taxon>Rodentia</taxon>
        <taxon>Sciuromorpha</taxon>
        <taxon>Sciuridae</taxon>
        <taxon>Sciurinae</taxon>
        <taxon>Pteromyini</taxon>
        <taxon>Hylopetes</taxon>
    </lineage>
</organism>
<keyword id="KW-0249">Electron transport</keyword>
<keyword id="KW-0349">Heme</keyword>
<keyword id="KW-0408">Iron</keyword>
<keyword id="KW-0472">Membrane</keyword>
<keyword id="KW-0479">Metal-binding</keyword>
<keyword id="KW-0496">Mitochondrion</keyword>
<keyword id="KW-0999">Mitochondrion inner membrane</keyword>
<keyword id="KW-0679">Respiratory chain</keyword>
<keyword id="KW-0812">Transmembrane</keyword>
<keyword id="KW-1133">Transmembrane helix</keyword>
<keyword id="KW-0813">Transport</keyword>
<keyword id="KW-0830">Ubiquinone</keyword>
<gene>
    <name type="primary">MT-CYB</name>
    <name type="synonym">COB</name>
    <name type="synonym">CYTB</name>
    <name type="synonym">MTCYB</name>
</gene>
<dbReference type="EMBL" id="DQ093190">
    <property type="protein sequence ID" value="AAZ68031.1"/>
    <property type="molecule type" value="Genomic_DNA"/>
</dbReference>
<dbReference type="SMR" id="Q104Y0"/>
<dbReference type="GO" id="GO:0005743">
    <property type="term" value="C:mitochondrial inner membrane"/>
    <property type="evidence" value="ECO:0007669"/>
    <property type="project" value="UniProtKB-SubCell"/>
</dbReference>
<dbReference type="GO" id="GO:0045275">
    <property type="term" value="C:respiratory chain complex III"/>
    <property type="evidence" value="ECO:0007669"/>
    <property type="project" value="InterPro"/>
</dbReference>
<dbReference type="GO" id="GO:0046872">
    <property type="term" value="F:metal ion binding"/>
    <property type="evidence" value="ECO:0007669"/>
    <property type="project" value="UniProtKB-KW"/>
</dbReference>
<dbReference type="GO" id="GO:0008121">
    <property type="term" value="F:ubiquinol-cytochrome-c reductase activity"/>
    <property type="evidence" value="ECO:0007669"/>
    <property type="project" value="InterPro"/>
</dbReference>
<dbReference type="GO" id="GO:0006122">
    <property type="term" value="P:mitochondrial electron transport, ubiquinol to cytochrome c"/>
    <property type="evidence" value="ECO:0007669"/>
    <property type="project" value="TreeGrafter"/>
</dbReference>
<dbReference type="CDD" id="cd00290">
    <property type="entry name" value="cytochrome_b_C"/>
    <property type="match status" value="1"/>
</dbReference>
<dbReference type="CDD" id="cd00284">
    <property type="entry name" value="Cytochrome_b_N"/>
    <property type="match status" value="1"/>
</dbReference>
<dbReference type="FunFam" id="1.20.810.10:FF:000002">
    <property type="entry name" value="Cytochrome b"/>
    <property type="match status" value="1"/>
</dbReference>
<dbReference type="Gene3D" id="1.20.810.10">
    <property type="entry name" value="Cytochrome Bc1 Complex, Chain C"/>
    <property type="match status" value="1"/>
</dbReference>
<dbReference type="InterPro" id="IPR005798">
    <property type="entry name" value="Cyt_b/b6_C"/>
</dbReference>
<dbReference type="InterPro" id="IPR036150">
    <property type="entry name" value="Cyt_b/b6_C_sf"/>
</dbReference>
<dbReference type="InterPro" id="IPR005797">
    <property type="entry name" value="Cyt_b/b6_N"/>
</dbReference>
<dbReference type="InterPro" id="IPR027387">
    <property type="entry name" value="Cytb/b6-like_sf"/>
</dbReference>
<dbReference type="InterPro" id="IPR030689">
    <property type="entry name" value="Cytochrome_b"/>
</dbReference>
<dbReference type="InterPro" id="IPR048260">
    <property type="entry name" value="Cytochrome_b_C_euk/bac"/>
</dbReference>
<dbReference type="InterPro" id="IPR048259">
    <property type="entry name" value="Cytochrome_b_N_euk/bac"/>
</dbReference>
<dbReference type="InterPro" id="IPR016174">
    <property type="entry name" value="Di-haem_cyt_TM"/>
</dbReference>
<dbReference type="PANTHER" id="PTHR19271">
    <property type="entry name" value="CYTOCHROME B"/>
    <property type="match status" value="1"/>
</dbReference>
<dbReference type="PANTHER" id="PTHR19271:SF16">
    <property type="entry name" value="CYTOCHROME B"/>
    <property type="match status" value="1"/>
</dbReference>
<dbReference type="Pfam" id="PF00032">
    <property type="entry name" value="Cytochrom_B_C"/>
    <property type="match status" value="1"/>
</dbReference>
<dbReference type="Pfam" id="PF00033">
    <property type="entry name" value="Cytochrome_B"/>
    <property type="match status" value="1"/>
</dbReference>
<dbReference type="PIRSF" id="PIRSF038885">
    <property type="entry name" value="COB"/>
    <property type="match status" value="1"/>
</dbReference>
<dbReference type="SUPFAM" id="SSF81648">
    <property type="entry name" value="a domain/subunit of cytochrome bc1 complex (Ubiquinol-cytochrome c reductase)"/>
    <property type="match status" value="1"/>
</dbReference>
<dbReference type="SUPFAM" id="SSF81342">
    <property type="entry name" value="Transmembrane di-heme cytochromes"/>
    <property type="match status" value="1"/>
</dbReference>
<dbReference type="PROSITE" id="PS51003">
    <property type="entry name" value="CYTB_CTER"/>
    <property type="match status" value="1"/>
</dbReference>
<dbReference type="PROSITE" id="PS51002">
    <property type="entry name" value="CYTB_NTER"/>
    <property type="match status" value="1"/>
</dbReference>
<accession>Q104Y0</accession>
<reference key="1">
    <citation type="submission" date="2005-06" db="EMBL/GenBank/DDBJ databases">
        <title>Phylogeny and biogeography of Eoglaucomys and Hylopetes (Rodentia: Sciuridae), inferred from molecular and morphometric analyses.</title>
        <authorList>
            <person name="Yu F."/>
            <person name="Pang J."/>
            <person name="Kilpatrick W.C."/>
            <person name="McGuire P.M."/>
            <person name="Wang Y."/>
            <person name="Woods C.A."/>
        </authorList>
    </citation>
    <scope>NUCLEOTIDE SEQUENCE [GENOMIC DNA]</scope>
    <source>
        <tissue>Skin</tissue>
    </source>
</reference>
<proteinExistence type="inferred from homology"/>
<sequence>MTNIRKTHPLIKIVNHSFIDLPTPSNISAWWNFGSLLGFCLIIQIITGLFLAMHYTSDTVTAFSSVTHICRDVNYGWLIRYMHANGASMFFICLFLHVGRGLYYGSYIYFETWNIGVILLFAVMATAFMGYVLPWGQMSFWGATVITNLLSAIPYIGTTLVEWIWGGFSVDKATLTRFFAFHFVLPFIIAALAMIHLLFLHETGSNNPSGLISDSDKIPFHPYFSIKDLLGVLILLLIFMNLVLFTPDLLGDPDNYTPANPLNTPPHIKPEWYFLFAYAILRSIPNKLGGVLALVFSILILMLFPILHLSKQRSMMFRPLSQCFFWILVADLFTLTWIGGQPVEHPFIIIGQTASILYFTIILVILPFISLLENKLLKW</sequence>